<name>HOOK3_BOVIN</name>
<organism>
    <name type="scientific">Bos taurus</name>
    <name type="common">Bovine</name>
    <dbReference type="NCBI Taxonomy" id="9913"/>
    <lineage>
        <taxon>Eukaryota</taxon>
        <taxon>Metazoa</taxon>
        <taxon>Chordata</taxon>
        <taxon>Craniata</taxon>
        <taxon>Vertebrata</taxon>
        <taxon>Euteleostomi</taxon>
        <taxon>Mammalia</taxon>
        <taxon>Eutheria</taxon>
        <taxon>Laurasiatheria</taxon>
        <taxon>Artiodactyla</taxon>
        <taxon>Ruminantia</taxon>
        <taxon>Pecora</taxon>
        <taxon>Bovidae</taxon>
        <taxon>Bovinae</taxon>
        <taxon>Bos</taxon>
    </lineage>
</organism>
<gene>
    <name type="primary">HOOK3</name>
</gene>
<evidence type="ECO:0000250" key="1">
    <source>
        <dbReference type="UniProtKB" id="Q86VS8"/>
    </source>
</evidence>
<evidence type="ECO:0000250" key="2">
    <source>
        <dbReference type="UniProtKB" id="Q8BUK6"/>
    </source>
</evidence>
<evidence type="ECO:0000269" key="3">
    <source>
    </source>
</evidence>
<evidence type="ECO:0000305" key="4"/>
<accession>P60316</accession>
<proteinExistence type="evidence at protein level"/>
<feature type="chain" id="PRO_0000219196" description="Protein Hook homolog 3">
    <location>
        <begin position="1" status="less than"/>
        <end position="12" status="greater than"/>
    </location>
</feature>
<feature type="non-terminal residue">
    <location>
        <position position="1"/>
    </location>
</feature>
<feature type="non-terminal residue">
    <location>
        <position position="12"/>
    </location>
</feature>
<sequence length="12" mass="1417">VELQNRLSDESQ</sequence>
<reference key="1">
    <citation type="journal article" date="2003" name="Mol. Microbiol.">
        <title>The Salmonella SpiC protein targets the mammalian Hook3 protein function to alter cellular trafficking.</title>
        <authorList>
            <person name="Shotland Y."/>
            <person name="Kraemer H."/>
            <person name="Groisman E.A."/>
        </authorList>
    </citation>
    <scope>PROTEIN SEQUENCE</scope>
    <scope>INTERACTION WITH SPIC (MICROBIAL INFECTION)</scope>
</reference>
<protein>
    <recommendedName>
        <fullName>Protein Hook homolog 3</fullName>
    </recommendedName>
</protein>
<comment type="function">
    <text evidence="1 2">Acts as an adapter protein linking the dynein motor complex to various cargos and converts dynein from a non-processive to a highly processive motor in the presence of dynactin. Facilitates the interaction between dynein and dynactin and activates dynein processivity (the ability to move along a microtubule for a long distance without falling off the track). Predominantly recruits 2 dyneins, which increases both the force and speed of the microtubule motor. Component of the FTS/Hook/FHIP complex (FHF complex). The FHF complex may function to promote vesicle trafficking and/or fusion via the homotypic vesicular protein sorting complex (the HOPS complex). May regulate clearance of endocytosed receptors such as MSR1. Participates in defining the architecture and localization of the Golgi complex. FHF complex promotes the distribution of AP-4 complex to the perinuclear area of the cell.</text>
</comment>
<comment type="function">
    <text evidence="3">(Microbial infection) Serves as a target for the spiC protein from Salmonella typhimurium, which inactivates it, leading to a strong alteration in cellular trafficking.</text>
</comment>
<comment type="subunit">
    <text evidence="1 2">Self-associates. Component of the FTS/Hook/FHIP complex (FHF complex), composed of AKTIP/FTS, FHIP1B, and one or more members of the Hook family of proteins HOOK1, HOOK2, and HOOK3. May interact directly with AKTIP/FTS, HOOK1 and HOOK2 (By similarity). Associates with several subunits of the homotypic vesicular sorting complex (the HOPS complex) including VPS16 and VPS41; these interactions may be indirect. Interacts with MSR1, and this association is stimulated by ligand binding to MSR1. Interacts with microtubules. Part of a tripartite complex with dynein and dynactin, acts an adapter linking the dynein motor complex and dynactin. Interacts with dynein intermediate chain and dynactin (DCTN1) (By similarity). Interacts with CCDC181 (By similarity). Interacts with LRGUK (By similarity).</text>
</comment>
<comment type="subunit">
    <text evidence="3">(Microbial infection) Interacts with Salmonella typhimurium spiC.</text>
</comment>
<comment type="subcellular location">
    <subcellularLocation>
        <location evidence="1">Cytoplasm</location>
        <location evidence="1">Cytoskeleton</location>
    </subcellularLocation>
    <subcellularLocation>
        <location evidence="1">Golgi apparatus</location>
    </subcellularLocation>
    <text evidence="1 2">Enriched at the cis-face of the Golgi complex. Localizes to microtubule asters in prophase (By similarity). Localizes to the manchette in elongating spermatids (By similarity).</text>
</comment>
<comment type="similarity">
    <text evidence="4">Belongs to the hook family.</text>
</comment>
<dbReference type="FunCoup" id="P60316">
    <property type="interactions" value="1"/>
</dbReference>
<dbReference type="InParanoid" id="P60316"/>
<dbReference type="OrthoDB" id="49395at2759"/>
<dbReference type="Proteomes" id="UP000009136">
    <property type="component" value="Unplaced"/>
</dbReference>
<dbReference type="GO" id="GO:0070695">
    <property type="term" value="C:FHF complex"/>
    <property type="evidence" value="ECO:0000250"/>
    <property type="project" value="UniProtKB"/>
</dbReference>
<dbReference type="GO" id="GO:0005794">
    <property type="term" value="C:Golgi apparatus"/>
    <property type="evidence" value="ECO:0007669"/>
    <property type="project" value="UniProtKB-SubCell"/>
</dbReference>
<dbReference type="GO" id="GO:0005874">
    <property type="term" value="C:microtubule"/>
    <property type="evidence" value="ECO:0007669"/>
    <property type="project" value="UniProtKB-KW"/>
</dbReference>
<dbReference type="GO" id="GO:0034452">
    <property type="term" value="F:dynactin binding"/>
    <property type="evidence" value="ECO:0000250"/>
    <property type="project" value="UniProtKB"/>
</dbReference>
<dbReference type="GO" id="GO:0045505">
    <property type="term" value="F:dynein intermediate chain binding"/>
    <property type="evidence" value="ECO:0000250"/>
    <property type="project" value="UniProtKB"/>
</dbReference>
<dbReference type="GO" id="GO:0045022">
    <property type="term" value="P:early endosome to late endosome transport"/>
    <property type="evidence" value="ECO:0000250"/>
    <property type="project" value="UniProtKB"/>
</dbReference>
<dbReference type="GO" id="GO:0007032">
    <property type="term" value="P:endosome organization"/>
    <property type="evidence" value="ECO:0000250"/>
    <property type="project" value="UniProtKB"/>
</dbReference>
<dbReference type="GO" id="GO:0008333">
    <property type="term" value="P:endosome to lysosome transport"/>
    <property type="evidence" value="ECO:0000250"/>
    <property type="project" value="UniProtKB"/>
</dbReference>
<dbReference type="GO" id="GO:0007040">
    <property type="term" value="P:lysosome organization"/>
    <property type="evidence" value="ECO:0000250"/>
    <property type="project" value="UniProtKB"/>
</dbReference>
<dbReference type="GO" id="GO:1905719">
    <property type="term" value="P:protein localization to perinuclear region of cytoplasm"/>
    <property type="evidence" value="ECO:0000250"/>
    <property type="project" value="UniProtKB"/>
</dbReference>
<dbReference type="GO" id="GO:0015031">
    <property type="term" value="P:protein transport"/>
    <property type="evidence" value="ECO:0007669"/>
    <property type="project" value="UniProtKB-KW"/>
</dbReference>
<keyword id="KW-0963">Cytoplasm</keyword>
<keyword id="KW-0206">Cytoskeleton</keyword>
<keyword id="KW-0903">Direct protein sequencing</keyword>
<keyword id="KW-0333">Golgi apparatus</keyword>
<keyword id="KW-0493">Microtubule</keyword>
<keyword id="KW-0653">Protein transport</keyword>
<keyword id="KW-1185">Reference proteome</keyword>
<keyword id="KW-0813">Transport</keyword>